<gene>
    <name evidence="1" type="primary">nfuA</name>
    <name type="ordered locus">VCM66_2640</name>
</gene>
<comment type="function">
    <text evidence="1">Involved in iron-sulfur cluster biogenesis. Binds a 4Fe-4S cluster, can transfer this cluster to apoproteins, and thereby intervenes in the maturation of Fe/S proteins. Could also act as a scaffold/chaperone for damaged Fe/S proteins.</text>
</comment>
<comment type="cofactor">
    <cofactor evidence="1">
        <name>[4Fe-4S] cluster</name>
        <dbReference type="ChEBI" id="CHEBI:49883"/>
    </cofactor>
    <text evidence="1">Binds 1 [4Fe-4S] cluster per subunit. The cluster is presumably bound at the interface of two monomers.</text>
</comment>
<comment type="subunit">
    <text evidence="1">Homodimer.</text>
</comment>
<comment type="similarity">
    <text evidence="1">Belongs to the NfuA family.</text>
</comment>
<name>NFUA_VIBCM</name>
<protein>
    <recommendedName>
        <fullName evidence="1">Fe/S biogenesis protein NfuA</fullName>
    </recommendedName>
</protein>
<proteinExistence type="inferred from homology"/>
<reference key="1">
    <citation type="journal article" date="2008" name="PLoS ONE">
        <title>A recalibrated molecular clock and independent origins for the cholera pandemic clones.</title>
        <authorList>
            <person name="Feng L."/>
            <person name="Reeves P.R."/>
            <person name="Lan R."/>
            <person name="Ren Y."/>
            <person name="Gao C."/>
            <person name="Zhou Z."/>
            <person name="Ren Y."/>
            <person name="Cheng J."/>
            <person name="Wang W."/>
            <person name="Wang J."/>
            <person name="Qian W."/>
            <person name="Li D."/>
            <person name="Wang L."/>
        </authorList>
    </citation>
    <scope>NUCLEOTIDE SEQUENCE [LARGE SCALE GENOMIC DNA]</scope>
    <source>
        <strain>M66-2</strain>
    </source>
</reference>
<keyword id="KW-0004">4Fe-4S</keyword>
<keyword id="KW-0408">Iron</keyword>
<keyword id="KW-0411">Iron-sulfur</keyword>
<keyword id="KW-0479">Metal-binding</keyword>
<sequence length="195" mass="21107">MSNPITITESAQSHFAKLLAQQPEGTNIRVFVVNPGTQNAECGVSYCPPEAVEATDTEYPFSGFSAYVDELSLPFLEEAVIDFVTDKMGSQLTLKAPNAKMRKVSDDASLMERVEYALQTQVNPQLAGHGGHVRLISISDDGVALVQFGGGCNGCSMVDVTLKEGIEKELLAQFAGELTAVRDSTEHDRGEHSYY</sequence>
<organism>
    <name type="scientific">Vibrio cholerae serotype O1 (strain M66-2)</name>
    <dbReference type="NCBI Taxonomy" id="579112"/>
    <lineage>
        <taxon>Bacteria</taxon>
        <taxon>Pseudomonadati</taxon>
        <taxon>Pseudomonadota</taxon>
        <taxon>Gammaproteobacteria</taxon>
        <taxon>Vibrionales</taxon>
        <taxon>Vibrionaceae</taxon>
        <taxon>Vibrio</taxon>
    </lineage>
</organism>
<dbReference type="EMBL" id="CP001233">
    <property type="protein sequence ID" value="ACP06934.1"/>
    <property type="molecule type" value="Genomic_DNA"/>
</dbReference>
<dbReference type="RefSeq" id="WP_000070178.1">
    <property type="nucleotide sequence ID" value="NC_012578.1"/>
</dbReference>
<dbReference type="SMR" id="C3LSE7"/>
<dbReference type="GeneID" id="89513292"/>
<dbReference type="KEGG" id="vcm:VCM66_2640"/>
<dbReference type="HOGENOM" id="CLU_094569_0_0_6"/>
<dbReference type="Proteomes" id="UP000001217">
    <property type="component" value="Chromosome I"/>
</dbReference>
<dbReference type="GO" id="GO:0051539">
    <property type="term" value="F:4 iron, 4 sulfur cluster binding"/>
    <property type="evidence" value="ECO:0007669"/>
    <property type="project" value="UniProtKB-UniRule"/>
</dbReference>
<dbReference type="GO" id="GO:0005506">
    <property type="term" value="F:iron ion binding"/>
    <property type="evidence" value="ECO:0007669"/>
    <property type="project" value="InterPro"/>
</dbReference>
<dbReference type="GO" id="GO:0016226">
    <property type="term" value="P:iron-sulfur cluster assembly"/>
    <property type="evidence" value="ECO:0007669"/>
    <property type="project" value="UniProtKB-UniRule"/>
</dbReference>
<dbReference type="GO" id="GO:0051604">
    <property type="term" value="P:protein maturation"/>
    <property type="evidence" value="ECO:0007669"/>
    <property type="project" value="UniProtKB-UniRule"/>
</dbReference>
<dbReference type="Gene3D" id="3.30.300.130">
    <property type="entry name" value="Fe-S cluster assembly (FSCA)"/>
    <property type="match status" value="1"/>
</dbReference>
<dbReference type="Gene3D" id="2.60.300.12">
    <property type="entry name" value="HesB-like domain"/>
    <property type="match status" value="1"/>
</dbReference>
<dbReference type="HAMAP" id="MF_01637">
    <property type="entry name" value="Fe_S_biogen_NfuA"/>
    <property type="match status" value="1"/>
</dbReference>
<dbReference type="InterPro" id="IPR017726">
    <property type="entry name" value="Fe/S_biogenesis_protein_NfuA"/>
</dbReference>
<dbReference type="InterPro" id="IPR000361">
    <property type="entry name" value="FeS_biogenesis"/>
</dbReference>
<dbReference type="InterPro" id="IPR034904">
    <property type="entry name" value="FSCA_dom_sf"/>
</dbReference>
<dbReference type="InterPro" id="IPR035903">
    <property type="entry name" value="HesB-like_dom_sf"/>
</dbReference>
<dbReference type="InterPro" id="IPR001075">
    <property type="entry name" value="NIF_FeS_clus_asmbl_NifU_C"/>
</dbReference>
<dbReference type="NCBIfam" id="NF008392">
    <property type="entry name" value="PRK11190.1"/>
    <property type="match status" value="1"/>
</dbReference>
<dbReference type="NCBIfam" id="TIGR03341">
    <property type="entry name" value="YhgI_GntY"/>
    <property type="match status" value="1"/>
</dbReference>
<dbReference type="PANTHER" id="PTHR11178:SF51">
    <property type="entry name" value="FE_S BIOGENESIS PROTEIN NFUA"/>
    <property type="match status" value="1"/>
</dbReference>
<dbReference type="PANTHER" id="PTHR11178">
    <property type="entry name" value="IRON-SULFUR CLUSTER SCAFFOLD PROTEIN NFU-RELATED"/>
    <property type="match status" value="1"/>
</dbReference>
<dbReference type="Pfam" id="PF01521">
    <property type="entry name" value="Fe-S_biosyn"/>
    <property type="match status" value="1"/>
</dbReference>
<dbReference type="Pfam" id="PF01106">
    <property type="entry name" value="NifU"/>
    <property type="match status" value="1"/>
</dbReference>
<dbReference type="SUPFAM" id="SSF117916">
    <property type="entry name" value="Fe-S cluster assembly (FSCA) domain-like"/>
    <property type="match status" value="1"/>
</dbReference>
<dbReference type="SUPFAM" id="SSF89360">
    <property type="entry name" value="HesB-like domain"/>
    <property type="match status" value="1"/>
</dbReference>
<feature type="chain" id="PRO_1000186786" description="Fe/S biogenesis protein NfuA">
    <location>
        <begin position="1"/>
        <end position="195"/>
    </location>
</feature>
<feature type="binding site" evidence="1">
    <location>
        <position position="152"/>
    </location>
    <ligand>
        <name>[4Fe-4S] cluster</name>
        <dbReference type="ChEBI" id="CHEBI:49883"/>
    </ligand>
</feature>
<feature type="binding site" evidence="1">
    <location>
        <position position="155"/>
    </location>
    <ligand>
        <name>[4Fe-4S] cluster</name>
        <dbReference type="ChEBI" id="CHEBI:49883"/>
    </ligand>
</feature>
<evidence type="ECO:0000255" key="1">
    <source>
        <dbReference type="HAMAP-Rule" id="MF_01637"/>
    </source>
</evidence>
<accession>C3LSE7</accession>